<gene>
    <name evidence="1" type="primary">dinB</name>
    <name type="ordered locus">lmo1975</name>
</gene>
<organism>
    <name type="scientific">Listeria monocytogenes serovar 1/2a (strain ATCC BAA-679 / EGD-e)</name>
    <dbReference type="NCBI Taxonomy" id="169963"/>
    <lineage>
        <taxon>Bacteria</taxon>
        <taxon>Bacillati</taxon>
        <taxon>Bacillota</taxon>
        <taxon>Bacilli</taxon>
        <taxon>Bacillales</taxon>
        <taxon>Listeriaceae</taxon>
        <taxon>Listeria</taxon>
    </lineage>
</organism>
<feature type="chain" id="PRO_0000173923" description="DNA polymerase IV">
    <location>
        <begin position="1"/>
        <end position="356"/>
    </location>
</feature>
<feature type="domain" description="UmuC" evidence="1">
    <location>
        <begin position="1"/>
        <end position="188"/>
    </location>
</feature>
<feature type="active site" evidence="1">
    <location>
        <position position="107"/>
    </location>
</feature>
<feature type="binding site" evidence="1">
    <location>
        <position position="11"/>
    </location>
    <ligand>
        <name>Mg(2+)</name>
        <dbReference type="ChEBI" id="CHEBI:18420"/>
    </ligand>
</feature>
<feature type="binding site" evidence="1">
    <location>
        <position position="106"/>
    </location>
    <ligand>
        <name>Mg(2+)</name>
        <dbReference type="ChEBI" id="CHEBI:18420"/>
    </ligand>
</feature>
<feature type="site" description="Substrate discrimination" evidence="1">
    <location>
        <position position="16"/>
    </location>
</feature>
<accession>Q8Y5T0</accession>
<protein>
    <recommendedName>
        <fullName evidence="1">DNA polymerase IV</fullName>
        <shortName evidence="1">Pol IV</shortName>
        <ecNumber evidence="1">2.7.7.7</ecNumber>
    </recommendedName>
</protein>
<dbReference type="EC" id="2.7.7.7" evidence="1"/>
<dbReference type="EMBL" id="AL591981">
    <property type="protein sequence ID" value="CAD00053.1"/>
    <property type="molecule type" value="Genomic_DNA"/>
</dbReference>
<dbReference type="PIR" id="AG1321">
    <property type="entry name" value="AG1321"/>
</dbReference>
<dbReference type="RefSeq" id="NP_465499.1">
    <property type="nucleotide sequence ID" value="NC_003210.1"/>
</dbReference>
<dbReference type="RefSeq" id="WP_010989855.1">
    <property type="nucleotide sequence ID" value="NZ_CP149495.1"/>
</dbReference>
<dbReference type="SMR" id="Q8Y5T0"/>
<dbReference type="STRING" id="169963.gene:17594660"/>
<dbReference type="PaxDb" id="169963-lmo1975"/>
<dbReference type="EnsemblBacteria" id="CAD00053">
    <property type="protein sequence ID" value="CAD00053"/>
    <property type="gene ID" value="CAD00053"/>
</dbReference>
<dbReference type="GeneID" id="985427"/>
<dbReference type="KEGG" id="lmo:lmo1975"/>
<dbReference type="PATRIC" id="fig|169963.11.peg.2022"/>
<dbReference type="eggNOG" id="COG0389">
    <property type="taxonomic scope" value="Bacteria"/>
</dbReference>
<dbReference type="HOGENOM" id="CLU_012348_1_2_9"/>
<dbReference type="OrthoDB" id="9808813at2"/>
<dbReference type="PhylomeDB" id="Q8Y5T0"/>
<dbReference type="BioCyc" id="LMON169963:LMO1975-MONOMER"/>
<dbReference type="Proteomes" id="UP000000817">
    <property type="component" value="Chromosome"/>
</dbReference>
<dbReference type="GO" id="GO:0005737">
    <property type="term" value="C:cytoplasm"/>
    <property type="evidence" value="ECO:0007669"/>
    <property type="project" value="UniProtKB-SubCell"/>
</dbReference>
<dbReference type="GO" id="GO:0003684">
    <property type="term" value="F:damaged DNA binding"/>
    <property type="evidence" value="ECO:0007669"/>
    <property type="project" value="InterPro"/>
</dbReference>
<dbReference type="GO" id="GO:0003887">
    <property type="term" value="F:DNA-directed DNA polymerase activity"/>
    <property type="evidence" value="ECO:0000318"/>
    <property type="project" value="GO_Central"/>
</dbReference>
<dbReference type="GO" id="GO:0000287">
    <property type="term" value="F:magnesium ion binding"/>
    <property type="evidence" value="ECO:0007669"/>
    <property type="project" value="UniProtKB-UniRule"/>
</dbReference>
<dbReference type="GO" id="GO:0006261">
    <property type="term" value="P:DNA-templated DNA replication"/>
    <property type="evidence" value="ECO:0007669"/>
    <property type="project" value="UniProtKB-UniRule"/>
</dbReference>
<dbReference type="GO" id="GO:0042276">
    <property type="term" value="P:error-prone translesion synthesis"/>
    <property type="evidence" value="ECO:0000318"/>
    <property type="project" value="GO_Central"/>
</dbReference>
<dbReference type="GO" id="GO:0009432">
    <property type="term" value="P:SOS response"/>
    <property type="evidence" value="ECO:0000269"/>
    <property type="project" value="CollecTF"/>
</dbReference>
<dbReference type="CDD" id="cd03586">
    <property type="entry name" value="PolY_Pol_IV_kappa"/>
    <property type="match status" value="1"/>
</dbReference>
<dbReference type="FunFam" id="1.10.150.20:FF:000062">
    <property type="entry name" value="DNA polymerase IV"/>
    <property type="match status" value="1"/>
</dbReference>
<dbReference type="FunFam" id="3.30.1490.100:FF:000004">
    <property type="entry name" value="DNA polymerase IV"/>
    <property type="match status" value="1"/>
</dbReference>
<dbReference type="FunFam" id="3.30.70.270:FF:000002">
    <property type="entry name" value="DNA polymerase IV"/>
    <property type="match status" value="1"/>
</dbReference>
<dbReference type="FunFam" id="3.40.1170.60:FF:000001">
    <property type="entry name" value="DNA polymerase IV"/>
    <property type="match status" value="1"/>
</dbReference>
<dbReference type="Gene3D" id="3.30.70.270">
    <property type="match status" value="1"/>
</dbReference>
<dbReference type="Gene3D" id="3.40.1170.60">
    <property type="match status" value="1"/>
</dbReference>
<dbReference type="Gene3D" id="1.10.150.20">
    <property type="entry name" value="5' to 3' exonuclease, C-terminal subdomain"/>
    <property type="match status" value="1"/>
</dbReference>
<dbReference type="Gene3D" id="3.30.1490.100">
    <property type="entry name" value="DNA polymerase, Y-family, little finger domain"/>
    <property type="match status" value="1"/>
</dbReference>
<dbReference type="HAMAP" id="MF_01113">
    <property type="entry name" value="DNApol_IV"/>
    <property type="match status" value="1"/>
</dbReference>
<dbReference type="InterPro" id="IPR043502">
    <property type="entry name" value="DNA/RNA_pol_sf"/>
</dbReference>
<dbReference type="InterPro" id="IPR036775">
    <property type="entry name" value="DNA_pol_Y-fam_lit_finger_sf"/>
</dbReference>
<dbReference type="InterPro" id="IPR017961">
    <property type="entry name" value="DNA_pol_Y-fam_little_finger"/>
</dbReference>
<dbReference type="InterPro" id="IPR050116">
    <property type="entry name" value="DNA_polymerase-Y"/>
</dbReference>
<dbReference type="InterPro" id="IPR022880">
    <property type="entry name" value="DNApol_IV"/>
</dbReference>
<dbReference type="InterPro" id="IPR024728">
    <property type="entry name" value="PolY_HhH_motif"/>
</dbReference>
<dbReference type="InterPro" id="IPR043128">
    <property type="entry name" value="Rev_trsase/Diguanyl_cyclase"/>
</dbReference>
<dbReference type="InterPro" id="IPR001126">
    <property type="entry name" value="UmuC"/>
</dbReference>
<dbReference type="NCBIfam" id="NF002677">
    <property type="entry name" value="PRK02406.1"/>
    <property type="match status" value="1"/>
</dbReference>
<dbReference type="NCBIfam" id="NF010731">
    <property type="entry name" value="PRK14133.1"/>
    <property type="match status" value="1"/>
</dbReference>
<dbReference type="PANTHER" id="PTHR11076:SF33">
    <property type="entry name" value="DNA POLYMERASE KAPPA"/>
    <property type="match status" value="1"/>
</dbReference>
<dbReference type="PANTHER" id="PTHR11076">
    <property type="entry name" value="DNA REPAIR POLYMERASE UMUC / TRANSFERASE FAMILY MEMBER"/>
    <property type="match status" value="1"/>
</dbReference>
<dbReference type="Pfam" id="PF00817">
    <property type="entry name" value="IMS"/>
    <property type="match status" value="1"/>
</dbReference>
<dbReference type="Pfam" id="PF11799">
    <property type="entry name" value="IMS_C"/>
    <property type="match status" value="1"/>
</dbReference>
<dbReference type="Pfam" id="PF11798">
    <property type="entry name" value="IMS_HHH"/>
    <property type="match status" value="1"/>
</dbReference>
<dbReference type="SUPFAM" id="SSF56672">
    <property type="entry name" value="DNA/RNA polymerases"/>
    <property type="match status" value="1"/>
</dbReference>
<dbReference type="SUPFAM" id="SSF100879">
    <property type="entry name" value="Lesion bypass DNA polymerase (Y-family), little finger domain"/>
    <property type="match status" value="1"/>
</dbReference>
<dbReference type="PROSITE" id="PS50173">
    <property type="entry name" value="UMUC"/>
    <property type="match status" value="1"/>
</dbReference>
<sequence>MDTSRKIIHIDMDAFYASVEQRDHPEFRGKPLIIGGDPNKRGVVATCSYEARKFGVHSAMPTRQAAKLCPNGIFIHGNMAHYVEVSNQIREIFSRYTDIIEPLSLDEAYLDVTENKKGMKSATMVAREIQQTIYQELGLTASAGVSFNKFIAKIASDFKKPAGITVVTPEEAEAFLEQIPVTKFYGVGKVTAEKLHRLGIETGADLKKWSEWDLIRELHKHGYHLYRHVRGRSNNIVNPHRDRKSVGKETTFEFNVLDSRVLEQSLMQFAKKVEERLIKLQKHGKTVVLKLRYSDFTTITKRLTLNEYTNDASQIYQAAALLLIESYTGQDSIRLIGLTVTNLKPVYFENLRLEGL</sequence>
<evidence type="ECO:0000255" key="1">
    <source>
        <dbReference type="HAMAP-Rule" id="MF_01113"/>
    </source>
</evidence>
<reference key="1">
    <citation type="journal article" date="2001" name="Science">
        <title>Comparative genomics of Listeria species.</title>
        <authorList>
            <person name="Glaser P."/>
            <person name="Frangeul L."/>
            <person name="Buchrieser C."/>
            <person name="Rusniok C."/>
            <person name="Amend A."/>
            <person name="Baquero F."/>
            <person name="Berche P."/>
            <person name="Bloecker H."/>
            <person name="Brandt P."/>
            <person name="Chakraborty T."/>
            <person name="Charbit A."/>
            <person name="Chetouani F."/>
            <person name="Couve E."/>
            <person name="de Daruvar A."/>
            <person name="Dehoux P."/>
            <person name="Domann E."/>
            <person name="Dominguez-Bernal G."/>
            <person name="Duchaud E."/>
            <person name="Durant L."/>
            <person name="Dussurget O."/>
            <person name="Entian K.-D."/>
            <person name="Fsihi H."/>
            <person name="Garcia-del Portillo F."/>
            <person name="Garrido P."/>
            <person name="Gautier L."/>
            <person name="Goebel W."/>
            <person name="Gomez-Lopez N."/>
            <person name="Hain T."/>
            <person name="Hauf J."/>
            <person name="Jackson D."/>
            <person name="Jones L.-M."/>
            <person name="Kaerst U."/>
            <person name="Kreft J."/>
            <person name="Kuhn M."/>
            <person name="Kunst F."/>
            <person name="Kurapkat G."/>
            <person name="Madueno E."/>
            <person name="Maitournam A."/>
            <person name="Mata Vicente J."/>
            <person name="Ng E."/>
            <person name="Nedjari H."/>
            <person name="Nordsiek G."/>
            <person name="Novella S."/>
            <person name="de Pablos B."/>
            <person name="Perez-Diaz J.-C."/>
            <person name="Purcell R."/>
            <person name="Remmel B."/>
            <person name="Rose M."/>
            <person name="Schlueter T."/>
            <person name="Simoes N."/>
            <person name="Tierrez A."/>
            <person name="Vazquez-Boland J.-A."/>
            <person name="Voss H."/>
            <person name="Wehland J."/>
            <person name="Cossart P."/>
        </authorList>
    </citation>
    <scope>NUCLEOTIDE SEQUENCE [LARGE SCALE GENOMIC DNA]</scope>
    <source>
        <strain>ATCC BAA-679 / EGD-e</strain>
    </source>
</reference>
<keyword id="KW-0963">Cytoplasm</keyword>
<keyword id="KW-0227">DNA damage</keyword>
<keyword id="KW-0234">DNA repair</keyword>
<keyword id="KW-0235">DNA replication</keyword>
<keyword id="KW-0238">DNA-binding</keyword>
<keyword id="KW-0239">DNA-directed DNA polymerase</keyword>
<keyword id="KW-0460">Magnesium</keyword>
<keyword id="KW-0479">Metal-binding</keyword>
<keyword id="KW-0515">Mutator protein</keyword>
<keyword id="KW-0548">Nucleotidyltransferase</keyword>
<keyword id="KW-1185">Reference proteome</keyword>
<keyword id="KW-0808">Transferase</keyword>
<proteinExistence type="inferred from homology"/>
<name>DPO4_LISMO</name>
<comment type="function">
    <text evidence="1">Poorly processive, error-prone DNA polymerase involved in untargeted mutagenesis. Copies undamaged DNA at stalled replication forks, which arise in vivo from mismatched or misaligned primer ends. These misaligned primers can be extended by PolIV. Exhibits no 3'-5' exonuclease (proofreading) activity. May be involved in translesional synthesis, in conjunction with the beta clamp from PolIII.</text>
</comment>
<comment type="catalytic activity">
    <reaction evidence="1">
        <text>DNA(n) + a 2'-deoxyribonucleoside 5'-triphosphate = DNA(n+1) + diphosphate</text>
        <dbReference type="Rhea" id="RHEA:22508"/>
        <dbReference type="Rhea" id="RHEA-COMP:17339"/>
        <dbReference type="Rhea" id="RHEA-COMP:17340"/>
        <dbReference type="ChEBI" id="CHEBI:33019"/>
        <dbReference type="ChEBI" id="CHEBI:61560"/>
        <dbReference type="ChEBI" id="CHEBI:173112"/>
        <dbReference type="EC" id="2.7.7.7"/>
    </reaction>
</comment>
<comment type="cofactor">
    <cofactor evidence="1">
        <name>Mg(2+)</name>
        <dbReference type="ChEBI" id="CHEBI:18420"/>
    </cofactor>
    <text evidence="1">Binds 2 magnesium ions per subunit.</text>
</comment>
<comment type="subunit">
    <text evidence="1">Monomer.</text>
</comment>
<comment type="subcellular location">
    <subcellularLocation>
        <location evidence="1">Cytoplasm</location>
    </subcellularLocation>
</comment>
<comment type="similarity">
    <text evidence="1">Belongs to the DNA polymerase type-Y family.</text>
</comment>